<keyword id="KW-1185">Reference proteome</keyword>
<evidence type="ECO:0000250" key="1">
    <source>
        <dbReference type="UniProtKB" id="P0C9L6"/>
    </source>
</evidence>
<evidence type="ECO:0000305" key="2"/>
<evidence type="ECO:0000312" key="3">
    <source>
        <dbReference type="EMBL" id="AIU95046.1"/>
    </source>
</evidence>
<dbReference type="EMBL" id="U18466">
    <property type="protein sequence ID" value="AIU95046.1"/>
    <property type="molecule type" value="Genomic_DNA"/>
</dbReference>
<dbReference type="RefSeq" id="YP_009094907.1">
    <property type="nucleotide sequence ID" value="NC_001659.2"/>
</dbReference>
<dbReference type="GeneID" id="22220406"/>
<dbReference type="KEGG" id="vg:22220406"/>
<dbReference type="Proteomes" id="UP000000624">
    <property type="component" value="Segment"/>
</dbReference>
<feature type="chain" id="PRO_0000444974" description="Protein MGF 300-4L">
    <location>
        <begin position="1"/>
        <end position="328"/>
    </location>
</feature>
<accession>A0A097SRX3</accession>
<protein>
    <recommendedName>
        <fullName>Protein MGF 300-4L</fullName>
    </recommendedName>
</protein>
<organismHost>
    <name type="scientific">Ornithodoros</name>
    <name type="common">relapsing fever ticks</name>
    <dbReference type="NCBI Taxonomy" id="6937"/>
</organismHost>
<organismHost>
    <name type="scientific">Sus scrofa</name>
    <name type="common">Pig</name>
    <dbReference type="NCBI Taxonomy" id="9823"/>
</organismHost>
<comment type="miscellaneous">
    <text evidence="1">Encoded by variable regions comprise the left 35-kb and the right 15-kb ends of the viral genome. Transcribed in host macrophages.</text>
</comment>
<comment type="similarity">
    <text evidence="2">Belongs to the asfivirus MGF 300 family.</text>
</comment>
<proteinExistence type="inferred from homology"/>
<name>3004L_ASFB7</name>
<reference key="1">
    <citation type="journal article" date="1995" name="Virology">
        <title>Analysis of the complete nucleotide sequence of African swine fever virus.</title>
        <authorList>
            <person name="Yanez R.J."/>
            <person name="Rodriguez J.M."/>
            <person name="Nogal M.L."/>
            <person name="Yuste L."/>
            <person name="Enriquez C."/>
            <person name="Rodriguez J.F."/>
            <person name="Vinuela E."/>
        </authorList>
    </citation>
    <scope>NUCLEOTIDE SEQUENCE [LARGE SCALE GENOMIC DNA]</scope>
</reference>
<gene>
    <name evidence="3" type="primary">J328L</name>
</gene>
<organism>
    <name type="scientific">African swine fever virus (strain Badajoz 1971 Vero-adapted)</name>
    <name type="common">Ba71V</name>
    <name type="synonym">ASFV</name>
    <dbReference type="NCBI Taxonomy" id="10498"/>
    <lineage>
        <taxon>Viruses</taxon>
        <taxon>Varidnaviria</taxon>
        <taxon>Bamfordvirae</taxon>
        <taxon>Nucleocytoviricota</taxon>
        <taxon>Pokkesviricetes</taxon>
        <taxon>Asfuvirales</taxon>
        <taxon>Asfarviridae</taxon>
        <taxon>Asfivirus</taxon>
        <taxon>African swine fever virus</taxon>
    </lineage>
</organism>
<sequence>MLSLFNIALKTLKNHIEFLKHDKDILTHLGLCCKNYDLIHKCSECGNICPNRQQHGTCININYLLIYAVKCDNYMLAYRLLCWGANEKFAHYFRRPLPNLKPLLPKKELTPKDIKQLAYEHFYSDSELITVFEVFRRCRNINDCLEFFYKKNLEFEIYFARLHVYSKTFYRKSWYWFCIFMAVKHGMKQALKKITKTYIPTFYNKTTLNLVLFLSACFYENVEWMKYFFYKANKKIQQRMLSYGMEWAATHGKVRTFVCCYTLGGTASLKMYQKAYQNERYMIMALCSYLGNIQINNPWDNLNPYMMMQNKEKFLPLKFSEETQYFYI</sequence>